<dbReference type="EC" id="2.3.2.27"/>
<dbReference type="EMBL" id="AF513708">
    <property type="protein sequence ID" value="AAQ08116.1"/>
    <property type="molecule type" value="mRNA"/>
</dbReference>
<dbReference type="CCDS" id="CCDS20159.1"/>
<dbReference type="RefSeq" id="NP_954594.1">
    <property type="nucleotide sequence ID" value="NM_199143.2"/>
</dbReference>
<dbReference type="SMR" id="Q71FD5"/>
<dbReference type="FunCoup" id="Q71FD5">
    <property type="interactions" value="1225"/>
</dbReference>
<dbReference type="STRING" id="10090.ENSMUSP00000078795"/>
<dbReference type="iPTMnet" id="Q71FD5"/>
<dbReference type="PhosphoSitePlus" id="Q71FD5"/>
<dbReference type="SwissPalm" id="Q71FD5"/>
<dbReference type="jPOST" id="Q71FD5"/>
<dbReference type="PaxDb" id="10090-ENSMUSP00000078795"/>
<dbReference type="PeptideAtlas" id="Q71FD5"/>
<dbReference type="ProteomicsDB" id="275043"/>
<dbReference type="Pumba" id="Q71FD5"/>
<dbReference type="Antibodypedia" id="35132">
    <property type="antibodies" value="114 antibodies from 26 providers"/>
</dbReference>
<dbReference type="DNASU" id="387524"/>
<dbReference type="Ensembl" id="ENSMUST00000079869.13">
    <property type="protein sequence ID" value="ENSMUSP00000078795.7"/>
    <property type="gene ID" value="ENSMUSG00000058446.15"/>
</dbReference>
<dbReference type="GeneID" id="387524"/>
<dbReference type="KEGG" id="mmu:387524"/>
<dbReference type="UCSC" id="uc009cae.2">
    <property type="organism name" value="mouse"/>
</dbReference>
<dbReference type="AGR" id="MGI:1196246"/>
<dbReference type="CTD" id="223082"/>
<dbReference type="MGI" id="MGI:1196246">
    <property type="gene designation" value="Znrf2"/>
</dbReference>
<dbReference type="VEuPathDB" id="HostDB:ENSMUSG00000058446"/>
<dbReference type="eggNOG" id="KOG0801">
    <property type="taxonomic scope" value="Eukaryota"/>
</dbReference>
<dbReference type="GeneTree" id="ENSGT00940000159017"/>
<dbReference type="HOGENOM" id="CLU_062700_2_0_1"/>
<dbReference type="InParanoid" id="Q71FD5"/>
<dbReference type="OMA" id="RGNDGHR"/>
<dbReference type="OrthoDB" id="10057496at2759"/>
<dbReference type="PhylomeDB" id="Q71FD5"/>
<dbReference type="TreeFam" id="TF317681"/>
<dbReference type="Reactome" id="R-MMU-983168">
    <property type="pathway name" value="Antigen processing: Ubiquitination &amp; Proteasome degradation"/>
</dbReference>
<dbReference type="UniPathway" id="UPA00143"/>
<dbReference type="BioGRID-ORCS" id="387524">
    <property type="hits" value="1 hit in 76 CRISPR screens"/>
</dbReference>
<dbReference type="ChiTaRS" id="Znrf2">
    <property type="organism name" value="mouse"/>
</dbReference>
<dbReference type="PRO" id="PR:Q71FD5"/>
<dbReference type="Proteomes" id="UP000000589">
    <property type="component" value="Chromosome 6"/>
</dbReference>
<dbReference type="RNAct" id="Q71FD5">
    <property type="molecule type" value="protein"/>
</dbReference>
<dbReference type="Bgee" id="ENSMUSG00000058446">
    <property type="expression patterns" value="Expressed in cortical plate and 259 other cell types or tissues"/>
</dbReference>
<dbReference type="ExpressionAtlas" id="Q71FD5">
    <property type="expression patterns" value="baseline and differential"/>
</dbReference>
<dbReference type="GO" id="GO:0042995">
    <property type="term" value="C:cell projection"/>
    <property type="evidence" value="ECO:0007669"/>
    <property type="project" value="UniProtKB-KW"/>
</dbReference>
<dbReference type="GO" id="GO:0005737">
    <property type="term" value="C:cytoplasm"/>
    <property type="evidence" value="ECO:0000266"/>
    <property type="project" value="MGI"/>
</dbReference>
<dbReference type="GO" id="GO:0030659">
    <property type="term" value="C:cytoplasmic vesicle membrane"/>
    <property type="evidence" value="ECO:0000266"/>
    <property type="project" value="MGI"/>
</dbReference>
<dbReference type="GO" id="GO:0010008">
    <property type="term" value="C:endosome membrane"/>
    <property type="evidence" value="ECO:0007669"/>
    <property type="project" value="UniProtKB-SubCell"/>
</dbReference>
<dbReference type="GO" id="GO:0001650">
    <property type="term" value="C:fibrillar center"/>
    <property type="evidence" value="ECO:0007669"/>
    <property type="project" value="Ensembl"/>
</dbReference>
<dbReference type="GO" id="GO:0005765">
    <property type="term" value="C:lysosomal membrane"/>
    <property type="evidence" value="ECO:0007669"/>
    <property type="project" value="UniProtKB-SubCell"/>
</dbReference>
<dbReference type="GO" id="GO:0005654">
    <property type="term" value="C:nucleoplasm"/>
    <property type="evidence" value="ECO:0007669"/>
    <property type="project" value="Ensembl"/>
</dbReference>
<dbReference type="GO" id="GO:0005886">
    <property type="term" value="C:plasma membrane"/>
    <property type="evidence" value="ECO:0000266"/>
    <property type="project" value="MGI"/>
</dbReference>
<dbReference type="GO" id="GO:0042734">
    <property type="term" value="C:presynaptic membrane"/>
    <property type="evidence" value="ECO:0007669"/>
    <property type="project" value="UniProtKB-SubCell"/>
</dbReference>
<dbReference type="GO" id="GO:0032991">
    <property type="term" value="C:protein-containing complex"/>
    <property type="evidence" value="ECO:0000266"/>
    <property type="project" value="MGI"/>
</dbReference>
<dbReference type="GO" id="GO:0061630">
    <property type="term" value="F:ubiquitin protein ligase activity"/>
    <property type="evidence" value="ECO:0000266"/>
    <property type="project" value="MGI"/>
</dbReference>
<dbReference type="GO" id="GO:0008270">
    <property type="term" value="F:zinc ion binding"/>
    <property type="evidence" value="ECO:0007669"/>
    <property type="project" value="UniProtKB-KW"/>
</dbReference>
<dbReference type="GO" id="GO:0160177">
    <property type="term" value="P:positive regulation of autophagosome-lysosome fusion"/>
    <property type="evidence" value="ECO:0007669"/>
    <property type="project" value="Ensembl"/>
</dbReference>
<dbReference type="GO" id="GO:0016567">
    <property type="term" value="P:protein ubiquitination"/>
    <property type="evidence" value="ECO:0007669"/>
    <property type="project" value="UniProtKB-UniPathway"/>
</dbReference>
<dbReference type="CDD" id="cd16695">
    <property type="entry name" value="mRING-CH-C4HC2H_ZNRF2"/>
    <property type="match status" value="1"/>
</dbReference>
<dbReference type="FunFam" id="3.30.40.10:FF:000363">
    <property type="entry name" value="E3 ubiquitin-protein ligase ZNRF2"/>
    <property type="match status" value="1"/>
</dbReference>
<dbReference type="Gene3D" id="3.30.160.60">
    <property type="entry name" value="Classic Zinc Finger"/>
    <property type="match status" value="1"/>
</dbReference>
<dbReference type="Gene3D" id="3.30.40.10">
    <property type="entry name" value="Zinc/RING finger domain, C3HC4 (zinc finger)"/>
    <property type="match status" value="1"/>
</dbReference>
<dbReference type="InterPro" id="IPR001841">
    <property type="entry name" value="Znf_RING"/>
</dbReference>
<dbReference type="InterPro" id="IPR013083">
    <property type="entry name" value="Znf_RING/FYVE/PHD"/>
</dbReference>
<dbReference type="InterPro" id="IPR051878">
    <property type="entry name" value="ZNRF_ubiq-protein_ligase"/>
</dbReference>
<dbReference type="PANTHER" id="PTHR46661">
    <property type="entry name" value="E3 UBIQUITIN-PROTEIN LIGASE ZNRF1-LIKE PROTEIN"/>
    <property type="match status" value="1"/>
</dbReference>
<dbReference type="PANTHER" id="PTHR46661:SF3">
    <property type="entry name" value="E3 UBIQUITIN-PROTEIN LIGASE ZNRF2"/>
    <property type="match status" value="1"/>
</dbReference>
<dbReference type="Pfam" id="PF13639">
    <property type="entry name" value="zf-RING_2"/>
    <property type="match status" value="1"/>
</dbReference>
<dbReference type="SMART" id="SM00184">
    <property type="entry name" value="RING"/>
    <property type="match status" value="1"/>
</dbReference>
<dbReference type="SUPFAM" id="SSF57850">
    <property type="entry name" value="RING/U-box"/>
    <property type="match status" value="1"/>
</dbReference>
<dbReference type="PROSITE" id="PS50089">
    <property type="entry name" value="ZF_RING_2"/>
    <property type="match status" value="1"/>
</dbReference>
<proteinExistence type="evidence at protein level"/>
<feature type="initiator methionine" description="Removed" evidence="3">
    <location>
        <position position="1"/>
    </location>
</feature>
<feature type="chain" id="PRO_0000277804" description="E3 ubiquitin-protein ligase ZNRF2">
    <location>
        <begin position="2"/>
        <end position="238"/>
    </location>
</feature>
<feature type="zinc finger region" description="RING-type; atypical" evidence="4">
    <location>
        <begin position="195"/>
        <end position="236"/>
    </location>
</feature>
<feature type="region of interest" description="Disordered" evidence="5">
    <location>
        <begin position="1"/>
        <end position="137"/>
    </location>
</feature>
<feature type="compositionally biased region" description="Low complexity" evidence="5">
    <location>
        <begin position="35"/>
        <end position="77"/>
    </location>
</feature>
<feature type="modified residue" description="Phosphoserine" evidence="9">
    <location>
        <position position="20"/>
    </location>
</feature>
<feature type="modified residue" description="Phosphoserine" evidence="9">
    <location>
        <position position="24"/>
    </location>
</feature>
<feature type="modified residue" description="Phosphoserine" evidence="7 9">
    <location>
        <position position="75"/>
    </location>
</feature>
<feature type="modified residue" description="Phosphoserine" evidence="2">
    <location>
        <position position="82"/>
    </location>
</feature>
<feature type="modified residue" description="Phosphoserine" evidence="9">
    <location>
        <position position="107"/>
    </location>
</feature>
<feature type="modified residue" description="Phosphoserine" evidence="9">
    <location>
        <position position="110"/>
    </location>
</feature>
<feature type="modified residue" description="Phosphoserine" evidence="8 9">
    <location>
        <position position="141"/>
    </location>
</feature>
<feature type="modified residue" description="Phosphoserine" evidence="2">
    <location>
        <position position="147"/>
    </location>
</feature>
<feature type="modified residue" description="Phosphoserine" evidence="2">
    <location>
        <position position="189"/>
    </location>
</feature>
<feature type="lipid moiety-binding region" description="N-myristoyl glycine" evidence="3">
    <location>
        <position position="2"/>
    </location>
</feature>
<reference key="1">
    <citation type="journal article" date="2003" name="J. Neurosci.">
        <title>ZNRF proteins constitute a family of presynaptic E3 ubiquitin ligases.</title>
        <authorList>
            <person name="Araki T."/>
            <person name="Milbrandt J."/>
        </authorList>
    </citation>
    <scope>NUCLEOTIDE SEQUENCE [MRNA]</scope>
    <scope>TISSUE SPECIFICITY</scope>
</reference>
<reference key="2">
    <citation type="journal article" date="2007" name="Proc. Natl. Acad. Sci. U.S.A.">
        <title>Large-scale phosphorylation analysis of mouse liver.</title>
        <authorList>
            <person name="Villen J."/>
            <person name="Beausoleil S.A."/>
            <person name="Gerber S.A."/>
            <person name="Gygi S.P."/>
        </authorList>
    </citation>
    <scope>PHOSPHORYLATION [LARGE SCALE ANALYSIS] AT SER-75</scope>
    <scope>IDENTIFICATION BY MASS SPECTROMETRY [LARGE SCALE ANALYSIS]</scope>
    <source>
        <tissue>Liver</tissue>
    </source>
</reference>
<reference key="3">
    <citation type="journal article" date="2009" name="Immunity">
        <title>The phagosomal proteome in interferon-gamma-activated macrophages.</title>
        <authorList>
            <person name="Trost M."/>
            <person name="English L."/>
            <person name="Lemieux S."/>
            <person name="Courcelles M."/>
            <person name="Desjardins M."/>
            <person name="Thibault P."/>
        </authorList>
    </citation>
    <scope>IDENTIFICATION BY MASS SPECTROMETRY [LARGE SCALE ANALYSIS]</scope>
</reference>
<reference key="4">
    <citation type="journal article" date="2009" name="Mol. Cell. Proteomics">
        <title>Large scale localization of protein phosphorylation by use of electron capture dissociation mass spectrometry.</title>
        <authorList>
            <person name="Sweet S.M."/>
            <person name="Bailey C.M."/>
            <person name="Cunningham D.L."/>
            <person name="Heath J.K."/>
            <person name="Cooper H.J."/>
        </authorList>
    </citation>
    <scope>PHOSPHORYLATION [LARGE SCALE ANALYSIS] AT SER-141</scope>
    <scope>IDENTIFICATION BY MASS SPECTROMETRY [LARGE SCALE ANALYSIS]</scope>
    <source>
        <tissue>Embryonic fibroblast</tissue>
    </source>
</reference>
<reference key="5">
    <citation type="journal article" date="2010" name="Cell">
        <title>A tissue-specific atlas of mouse protein phosphorylation and expression.</title>
        <authorList>
            <person name="Huttlin E.L."/>
            <person name="Jedrychowski M.P."/>
            <person name="Elias J.E."/>
            <person name="Goswami T."/>
            <person name="Rad R."/>
            <person name="Beausoleil S.A."/>
            <person name="Villen J."/>
            <person name="Haas W."/>
            <person name="Sowa M.E."/>
            <person name="Gygi S.P."/>
        </authorList>
    </citation>
    <scope>PHOSPHORYLATION [LARGE SCALE ANALYSIS] AT SER-20; SER-24; SER-75; SER-107; SER-110 AND SER-141</scope>
    <scope>IDENTIFICATION BY MASS SPECTROMETRY [LARGE SCALE ANALYSIS]</scope>
    <source>
        <tissue>Brain</tissue>
        <tissue>Brown adipose tissue</tissue>
        <tissue>Heart</tissue>
        <tissue>Kidney</tissue>
        <tissue>Liver</tissue>
        <tissue>Lung</tissue>
        <tissue>Pancreas</tissue>
        <tissue>Spleen</tissue>
        <tissue>Testis</tissue>
    </source>
</reference>
<comment type="function">
    <text evidence="2">E3 ubiquitin-protein ligase that plays a role in the establishment and maintenance of neuronal transmission and plasticity. Ubiquitinates the Na(+)/K(+) ATPase alpha-1 subunit/ATP1A1 and thereby influences its endocytosis and/or degradation. Also acts as a positive regulator of mTORC1 activation by amino acids, which functions upstream of the V-ATPase and of Rag-GTPases. In turn, phosphorylation by mTOR leads to its inhibition via targeting to the cytosol allowing a self-regulating feedback mechanism.</text>
</comment>
<comment type="catalytic activity">
    <reaction evidence="2">
        <text>S-ubiquitinyl-[E2 ubiquitin-conjugating enzyme]-L-cysteine + [acceptor protein]-L-lysine = [E2 ubiquitin-conjugating enzyme]-L-cysteine + N(6)-ubiquitinyl-[acceptor protein]-L-lysine.</text>
        <dbReference type="EC" id="2.3.2.27"/>
    </reaction>
</comment>
<comment type="pathway">
    <text>Protein modification; protein ubiquitination.</text>
</comment>
<comment type="subunit">
    <text evidence="2">Interacts with UBE2N. Interacts with ZNRF1. Interacts (when phosphorylated) with YWHAE.</text>
</comment>
<comment type="subcellular location">
    <subcellularLocation>
        <location evidence="2">Endosome membrane</location>
        <topology evidence="2">Peripheral membrane protein</topology>
    </subcellularLocation>
    <subcellularLocation>
        <location evidence="2">Lysosome membrane</location>
        <topology evidence="2">Peripheral membrane protein</topology>
    </subcellularLocation>
    <subcellularLocation>
        <location evidence="2">Presynaptic cell membrane</location>
        <topology evidence="2">Peripheral membrane protein</topology>
    </subcellularLocation>
    <subcellularLocation>
        <location evidence="2">Cytoplasm</location>
    </subcellularLocation>
</comment>
<comment type="tissue specificity">
    <text evidence="6">Expressed primarily in the nervous system. Expression is more intense in the granular cell layer of hippocampus, Purkinje cell layer of the cerebellum and the granular cell layer of the olfactory bulb. Detected in sensory neurons but not expressed in sympatic or enteric neurons. Expressed in testis, adipose tissue, columnar epithelial cells of the gut.</text>
</comment>
<comment type="domain">
    <text evidence="1">The RING-type zinc finger domain is required for E3 ligase activity.</text>
</comment>
<comment type="PTM">
    <text evidence="2">Phosphorylated; leading to binding to YWHAE. Phosphorylated by MTOR at Ser-147 and dephosphorylated by PP6C. Ser-147 phosphorylation stimulates vesicle-to-cytosol translocation.</text>
</comment>
<name>ZNRF2_MOUSE</name>
<keyword id="KW-1003">Cell membrane</keyword>
<keyword id="KW-0966">Cell projection</keyword>
<keyword id="KW-0963">Cytoplasm</keyword>
<keyword id="KW-0967">Endosome</keyword>
<keyword id="KW-0449">Lipoprotein</keyword>
<keyword id="KW-0458">Lysosome</keyword>
<keyword id="KW-0472">Membrane</keyword>
<keyword id="KW-0479">Metal-binding</keyword>
<keyword id="KW-0519">Myristate</keyword>
<keyword id="KW-0597">Phosphoprotein</keyword>
<keyword id="KW-1185">Reference proteome</keyword>
<keyword id="KW-0770">Synapse</keyword>
<keyword id="KW-0808">Transferase</keyword>
<keyword id="KW-0833">Ubl conjugation pathway</keyword>
<keyword id="KW-0862">Zinc</keyword>
<keyword id="KW-0863">Zinc-finger</keyword>
<accession>Q71FD5</accession>
<gene>
    <name type="primary">Znrf2</name>
</gene>
<evidence type="ECO:0000250" key="1"/>
<evidence type="ECO:0000250" key="2">
    <source>
        <dbReference type="UniProtKB" id="Q8NHG8"/>
    </source>
</evidence>
<evidence type="ECO:0000255" key="3"/>
<evidence type="ECO:0000255" key="4">
    <source>
        <dbReference type="PROSITE-ProRule" id="PRU00175"/>
    </source>
</evidence>
<evidence type="ECO:0000256" key="5">
    <source>
        <dbReference type="SAM" id="MobiDB-lite"/>
    </source>
</evidence>
<evidence type="ECO:0000269" key="6">
    <source>
    </source>
</evidence>
<evidence type="ECO:0007744" key="7">
    <source>
    </source>
</evidence>
<evidence type="ECO:0007744" key="8">
    <source>
    </source>
</evidence>
<evidence type="ECO:0007744" key="9">
    <source>
    </source>
</evidence>
<protein>
    <recommendedName>
        <fullName>E3 ubiquitin-protein ligase ZNRF2</fullName>
        <ecNumber>2.3.2.27</ecNumber>
    </recommendedName>
    <alternativeName>
        <fullName>RING-type E3 ubiquitin transferase ZNRF2</fullName>
    </alternativeName>
    <alternativeName>
        <fullName>Zinc/RING finger protein 2</fullName>
    </alternativeName>
</protein>
<organism>
    <name type="scientific">Mus musculus</name>
    <name type="common">Mouse</name>
    <dbReference type="NCBI Taxonomy" id="10090"/>
    <lineage>
        <taxon>Eukaryota</taxon>
        <taxon>Metazoa</taxon>
        <taxon>Chordata</taxon>
        <taxon>Craniata</taxon>
        <taxon>Vertebrata</taxon>
        <taxon>Euteleostomi</taxon>
        <taxon>Mammalia</taxon>
        <taxon>Eutheria</taxon>
        <taxon>Euarchontoglires</taxon>
        <taxon>Glires</taxon>
        <taxon>Rodentia</taxon>
        <taxon>Myomorpha</taxon>
        <taxon>Muroidea</taxon>
        <taxon>Muridae</taxon>
        <taxon>Murinae</taxon>
        <taxon>Mus</taxon>
        <taxon>Mus</taxon>
    </lineage>
</organism>
<sequence>MGAKQSGPAANGRTRAYSGSDLPSGTGSGGGGADGARAARFAAPVSGAQQPSASAGAAAAAAAAASAPAAPRSRSLGGAVGSASGGRAAQSAFSIPSAGGGGGPYGSQDSVHSSPEDSVGARDRDRPAGGGPGGPRLVIGSLPAHLSPHLFGGFKCPVCSKFVPSDEMDLHLVMCLTKPRITYNEDVLSKDTGECAICLEELQQGDTIARLPCLCIYHKGCIDEWFEVNRSCPEHPSD</sequence>